<proteinExistence type="inferred from homology"/>
<feature type="chain" id="PRO_0000361206" description="Putative S-adenosyl-L-methionine-dependent methyltransferase Mjls_0358">
    <location>
        <begin position="1"/>
        <end position="300"/>
    </location>
</feature>
<feature type="binding site" evidence="1">
    <location>
        <position position="128"/>
    </location>
    <ligand>
        <name>S-adenosyl-L-methionine</name>
        <dbReference type="ChEBI" id="CHEBI:59789"/>
    </ligand>
</feature>
<feature type="binding site" evidence="1">
    <location>
        <begin position="157"/>
        <end position="158"/>
    </location>
    <ligand>
        <name>S-adenosyl-L-methionine</name>
        <dbReference type="ChEBI" id="CHEBI:59789"/>
    </ligand>
</feature>
<gene>
    <name type="ordered locus">Mjls_0358</name>
</gene>
<comment type="function">
    <text evidence="1">Exhibits S-adenosyl-L-methionine-dependent methyltransferase activity.</text>
</comment>
<comment type="similarity">
    <text evidence="2">Belongs to the UPF0677 family.</text>
</comment>
<evidence type="ECO:0000250" key="1"/>
<evidence type="ECO:0000305" key="2"/>
<protein>
    <recommendedName>
        <fullName>Putative S-adenosyl-L-methionine-dependent methyltransferase Mjls_0358</fullName>
        <ecNumber>2.1.1.-</ecNumber>
    </recommendedName>
</protein>
<reference key="1">
    <citation type="submission" date="2007-02" db="EMBL/GenBank/DDBJ databases">
        <title>Complete sequence of Mycobacterium sp. JLS.</title>
        <authorList>
            <consortium name="US DOE Joint Genome Institute"/>
            <person name="Copeland A."/>
            <person name="Lucas S."/>
            <person name="Lapidus A."/>
            <person name="Barry K."/>
            <person name="Detter J.C."/>
            <person name="Glavina del Rio T."/>
            <person name="Hammon N."/>
            <person name="Israni S."/>
            <person name="Dalin E."/>
            <person name="Tice H."/>
            <person name="Pitluck S."/>
            <person name="Chain P."/>
            <person name="Malfatti S."/>
            <person name="Shin M."/>
            <person name="Vergez L."/>
            <person name="Schmutz J."/>
            <person name="Larimer F."/>
            <person name="Land M."/>
            <person name="Hauser L."/>
            <person name="Kyrpides N."/>
            <person name="Mikhailova N."/>
            <person name="Miller C.D."/>
            <person name="Anderson A.J."/>
            <person name="Sims R.C."/>
            <person name="Richardson P."/>
        </authorList>
    </citation>
    <scope>NUCLEOTIDE SEQUENCE [LARGE SCALE GENOMIC DNA]</scope>
    <source>
        <strain>JLS</strain>
    </source>
</reference>
<name>Y358_MYCSJ</name>
<accession>A3PTE4</accession>
<keyword id="KW-0489">Methyltransferase</keyword>
<keyword id="KW-0949">S-adenosyl-L-methionine</keyword>
<keyword id="KW-0808">Transferase</keyword>
<organism>
    <name type="scientific">Mycobacterium sp. (strain JLS)</name>
    <dbReference type="NCBI Taxonomy" id="164757"/>
    <lineage>
        <taxon>Bacteria</taxon>
        <taxon>Bacillati</taxon>
        <taxon>Actinomycetota</taxon>
        <taxon>Actinomycetes</taxon>
        <taxon>Mycobacteriales</taxon>
        <taxon>Mycobacteriaceae</taxon>
        <taxon>Mycobacterium</taxon>
    </lineage>
</organism>
<sequence length="300" mass="32913">MRHDNDSWDITTSVGSTALFVAASRALEARKPDPLAVDPYAEVFCRAAGGDWAGLFDAGADPKPDHVLFSEFGEQFVNFQGARTRYFDAYFAAASDAGVRQVVLLAAGLDSRAYRLPWPDGTVVYELDQPRVLEFKREVLAERGEQPVAQRREVAVDLRDDWCAALTAAGFDPARPSAWLAEGLLMYLPATAQEALFSGIDALSAPRSWAAVEESVPMPAEVFAYKREEERAAGEEGTFFTLVYNERHAPAERWFGERGWAAEPTSLADYLTRVGRPAPVDDPEFGAMISAIRLVTATKG</sequence>
<dbReference type="EC" id="2.1.1.-"/>
<dbReference type="EMBL" id="CP000580">
    <property type="protein sequence ID" value="ABN96171.1"/>
    <property type="molecule type" value="Genomic_DNA"/>
</dbReference>
<dbReference type="SMR" id="A3PTE4"/>
<dbReference type="KEGG" id="mjl:Mjls_0358"/>
<dbReference type="HOGENOM" id="CLU_056160_2_1_11"/>
<dbReference type="BioCyc" id="MSP164757:G1G8C-363-MONOMER"/>
<dbReference type="GO" id="GO:0008168">
    <property type="term" value="F:methyltransferase activity"/>
    <property type="evidence" value="ECO:0007669"/>
    <property type="project" value="UniProtKB-KW"/>
</dbReference>
<dbReference type="GO" id="GO:0032259">
    <property type="term" value="P:methylation"/>
    <property type="evidence" value="ECO:0007669"/>
    <property type="project" value="UniProtKB-KW"/>
</dbReference>
<dbReference type="FunFam" id="3.40.50.150:FF:000152">
    <property type="entry name" value="S-adenosyl-L-methionine-dependent methyltransferase"/>
    <property type="match status" value="1"/>
</dbReference>
<dbReference type="Gene3D" id="3.40.50.150">
    <property type="entry name" value="Vaccinia Virus protein VP39"/>
    <property type="match status" value="1"/>
</dbReference>
<dbReference type="InterPro" id="IPR007213">
    <property type="entry name" value="Ppm1/Ppm2/Tcmp"/>
</dbReference>
<dbReference type="InterPro" id="IPR029063">
    <property type="entry name" value="SAM-dependent_MTases_sf"/>
</dbReference>
<dbReference type="InterPro" id="IPR011610">
    <property type="entry name" value="SAM_mthyl_Trfase_ML2640-like"/>
</dbReference>
<dbReference type="NCBIfam" id="TIGR00027">
    <property type="entry name" value="mthyl_TIGR00027"/>
    <property type="match status" value="1"/>
</dbReference>
<dbReference type="PANTHER" id="PTHR43619">
    <property type="entry name" value="S-ADENOSYL-L-METHIONINE-DEPENDENT METHYLTRANSFERASE YKTD-RELATED"/>
    <property type="match status" value="1"/>
</dbReference>
<dbReference type="PANTHER" id="PTHR43619:SF2">
    <property type="entry name" value="S-ADENOSYL-L-METHIONINE-DEPENDENT METHYLTRANSFERASES SUPERFAMILY PROTEIN"/>
    <property type="match status" value="1"/>
</dbReference>
<dbReference type="Pfam" id="PF04072">
    <property type="entry name" value="LCM"/>
    <property type="match status" value="1"/>
</dbReference>
<dbReference type="SUPFAM" id="SSF53335">
    <property type="entry name" value="S-adenosyl-L-methionine-dependent methyltransferases"/>
    <property type="match status" value="1"/>
</dbReference>